<evidence type="ECO:0000255" key="1">
    <source>
        <dbReference type="HAMAP-Rule" id="MF_00412"/>
    </source>
</evidence>
<organism>
    <name type="scientific">Afipia carboxidovorans (strain ATCC 49405 / DSM 1227 / KCTC 32145 / OM5)</name>
    <name type="common">Oligotropha carboxidovorans</name>
    <dbReference type="NCBI Taxonomy" id="504832"/>
    <lineage>
        <taxon>Bacteria</taxon>
        <taxon>Pseudomonadati</taxon>
        <taxon>Pseudomonadota</taxon>
        <taxon>Alphaproteobacteria</taxon>
        <taxon>Hyphomicrobiales</taxon>
        <taxon>Nitrobacteraceae</taxon>
        <taxon>Afipia</taxon>
    </lineage>
</organism>
<comment type="function">
    <text evidence="1">Catalyzes the NADPH-dependent reduction of L-glutamate 5-phosphate into L-glutamate 5-semialdehyde and phosphate. The product spontaneously undergoes cyclization to form 1-pyrroline-5-carboxylate.</text>
</comment>
<comment type="catalytic activity">
    <reaction evidence="1">
        <text>L-glutamate 5-semialdehyde + phosphate + NADP(+) = L-glutamyl 5-phosphate + NADPH + H(+)</text>
        <dbReference type="Rhea" id="RHEA:19541"/>
        <dbReference type="ChEBI" id="CHEBI:15378"/>
        <dbReference type="ChEBI" id="CHEBI:43474"/>
        <dbReference type="ChEBI" id="CHEBI:57783"/>
        <dbReference type="ChEBI" id="CHEBI:58066"/>
        <dbReference type="ChEBI" id="CHEBI:58274"/>
        <dbReference type="ChEBI" id="CHEBI:58349"/>
        <dbReference type="EC" id="1.2.1.41"/>
    </reaction>
</comment>
<comment type="pathway">
    <text evidence="1">Amino-acid biosynthesis; L-proline biosynthesis; L-glutamate 5-semialdehyde from L-glutamate: step 2/2.</text>
</comment>
<comment type="subcellular location">
    <subcellularLocation>
        <location evidence="1">Cytoplasm</location>
    </subcellularLocation>
</comment>
<comment type="similarity">
    <text evidence="1">Belongs to the gamma-glutamyl phosphate reductase family.</text>
</comment>
<sequence>MNAPLKADDTDLAALMADLATKARAAARVLALAPAEQKNTGLAAMAAALRASAPKLLAANAEDVAEARASGATPAFVDRLALNDARIETMAAGLDVVRGLDDPVGKVTERWTRPNGMTIERVRVPLGVAAVIFESRPNVLADAGALCLKSGNAVILRGGSDSFRSCQAIHACLTQGLREAGLPEAAISLVPTRDRAAVGLLLSGLDGRIDVIVPRGGKSLVARVEAEARVPVFAHLDGNNHVFVDKAASLDMAKTIVLNAKMRRPGICGAAETLLVDKAAAPAQLKPLVGMLIDAGCEVRGDTDVQKADARVTPVTEDDWATEFEAPIIAAKVVGGLDEAIAHIERYGSHHTDAIVTDDATAATRFLNEVDSAIVLHNASTQFADGGEFGFGAEIGIATGKFHARGPVGVEQLTSFKYRVHGTGQTRP</sequence>
<feature type="chain" id="PRO_1000193632" description="Gamma-glutamyl phosphate reductase">
    <location>
        <begin position="1"/>
        <end position="428"/>
    </location>
</feature>
<reference key="1">
    <citation type="journal article" date="2008" name="J. Bacteriol.">
        <title>Genome sequence of the chemolithoautotrophic bacterium Oligotropha carboxidovorans OM5T.</title>
        <authorList>
            <person name="Paul D."/>
            <person name="Bridges S."/>
            <person name="Burgess S.C."/>
            <person name="Dandass Y."/>
            <person name="Lawrence M.L."/>
        </authorList>
    </citation>
    <scope>NUCLEOTIDE SEQUENCE [LARGE SCALE GENOMIC DNA]</scope>
    <source>
        <strain>ATCC 49405 / DSM 1227 / KCTC 32145 / OM5</strain>
    </source>
</reference>
<reference key="2">
    <citation type="journal article" date="2011" name="J. Bacteriol.">
        <title>Complete genome sequences of the chemolithoautotrophic Oligotropha carboxidovorans strains OM4 and OM5.</title>
        <authorList>
            <person name="Volland S."/>
            <person name="Rachinger M."/>
            <person name="Strittmatter A."/>
            <person name="Daniel R."/>
            <person name="Gottschalk G."/>
            <person name="Meyer O."/>
        </authorList>
    </citation>
    <scope>NUCLEOTIDE SEQUENCE [LARGE SCALE GENOMIC DNA]</scope>
    <source>
        <strain>ATCC 49405 / DSM 1227 / KCTC 32145 / OM5</strain>
    </source>
</reference>
<dbReference type="EC" id="1.2.1.41" evidence="1"/>
<dbReference type="EMBL" id="CP001196">
    <property type="protein sequence ID" value="ACI91749.1"/>
    <property type="molecule type" value="Genomic_DNA"/>
</dbReference>
<dbReference type="EMBL" id="CP002826">
    <property type="protein sequence ID" value="AEI08013.1"/>
    <property type="molecule type" value="Genomic_DNA"/>
</dbReference>
<dbReference type="RefSeq" id="WP_012561780.1">
    <property type="nucleotide sequence ID" value="NC_015684.1"/>
</dbReference>
<dbReference type="SMR" id="B6JD19"/>
<dbReference type="STRING" id="504832.OCA5_c33390"/>
<dbReference type="KEGG" id="oca:OCAR_4605"/>
<dbReference type="KEGG" id="ocg:OCA5_c33390"/>
<dbReference type="PATRIC" id="fig|504832.7.peg.3510"/>
<dbReference type="eggNOG" id="COG0014">
    <property type="taxonomic scope" value="Bacteria"/>
</dbReference>
<dbReference type="HOGENOM" id="CLU_030231_0_0_5"/>
<dbReference type="OrthoDB" id="9809970at2"/>
<dbReference type="UniPathway" id="UPA00098">
    <property type="reaction ID" value="UER00360"/>
</dbReference>
<dbReference type="Proteomes" id="UP000007730">
    <property type="component" value="Chromosome"/>
</dbReference>
<dbReference type="GO" id="GO:0005737">
    <property type="term" value="C:cytoplasm"/>
    <property type="evidence" value="ECO:0007669"/>
    <property type="project" value="UniProtKB-SubCell"/>
</dbReference>
<dbReference type="GO" id="GO:0004350">
    <property type="term" value="F:glutamate-5-semialdehyde dehydrogenase activity"/>
    <property type="evidence" value="ECO:0007669"/>
    <property type="project" value="UniProtKB-UniRule"/>
</dbReference>
<dbReference type="GO" id="GO:0050661">
    <property type="term" value="F:NADP binding"/>
    <property type="evidence" value="ECO:0007669"/>
    <property type="project" value="InterPro"/>
</dbReference>
<dbReference type="GO" id="GO:0055129">
    <property type="term" value="P:L-proline biosynthetic process"/>
    <property type="evidence" value="ECO:0007669"/>
    <property type="project" value="UniProtKB-UniRule"/>
</dbReference>
<dbReference type="CDD" id="cd07079">
    <property type="entry name" value="ALDH_F18-19_ProA-GPR"/>
    <property type="match status" value="1"/>
</dbReference>
<dbReference type="FunFam" id="3.40.309.10:FF:000006">
    <property type="entry name" value="Gamma-glutamyl phosphate reductase"/>
    <property type="match status" value="1"/>
</dbReference>
<dbReference type="Gene3D" id="3.40.605.10">
    <property type="entry name" value="Aldehyde Dehydrogenase, Chain A, domain 1"/>
    <property type="match status" value="1"/>
</dbReference>
<dbReference type="Gene3D" id="3.40.309.10">
    <property type="entry name" value="Aldehyde Dehydrogenase, Chain A, domain 2"/>
    <property type="match status" value="1"/>
</dbReference>
<dbReference type="HAMAP" id="MF_00412">
    <property type="entry name" value="ProA"/>
    <property type="match status" value="1"/>
</dbReference>
<dbReference type="InterPro" id="IPR016161">
    <property type="entry name" value="Ald_DH/histidinol_DH"/>
</dbReference>
<dbReference type="InterPro" id="IPR016163">
    <property type="entry name" value="Ald_DH_C"/>
</dbReference>
<dbReference type="InterPro" id="IPR016162">
    <property type="entry name" value="Ald_DH_N"/>
</dbReference>
<dbReference type="InterPro" id="IPR015590">
    <property type="entry name" value="Aldehyde_DH_dom"/>
</dbReference>
<dbReference type="InterPro" id="IPR020593">
    <property type="entry name" value="G-glutamylP_reductase_CS"/>
</dbReference>
<dbReference type="InterPro" id="IPR012134">
    <property type="entry name" value="Glu-5-SA_DH"/>
</dbReference>
<dbReference type="InterPro" id="IPR000965">
    <property type="entry name" value="GPR_dom"/>
</dbReference>
<dbReference type="NCBIfam" id="NF001221">
    <property type="entry name" value="PRK00197.1"/>
    <property type="match status" value="1"/>
</dbReference>
<dbReference type="NCBIfam" id="TIGR00407">
    <property type="entry name" value="proA"/>
    <property type="match status" value="1"/>
</dbReference>
<dbReference type="PANTHER" id="PTHR11063:SF8">
    <property type="entry name" value="DELTA-1-PYRROLINE-5-CARBOXYLATE SYNTHASE"/>
    <property type="match status" value="1"/>
</dbReference>
<dbReference type="PANTHER" id="PTHR11063">
    <property type="entry name" value="GLUTAMATE SEMIALDEHYDE DEHYDROGENASE"/>
    <property type="match status" value="1"/>
</dbReference>
<dbReference type="Pfam" id="PF00171">
    <property type="entry name" value="Aldedh"/>
    <property type="match status" value="1"/>
</dbReference>
<dbReference type="PIRSF" id="PIRSF000151">
    <property type="entry name" value="GPR"/>
    <property type="match status" value="1"/>
</dbReference>
<dbReference type="SUPFAM" id="SSF53720">
    <property type="entry name" value="ALDH-like"/>
    <property type="match status" value="1"/>
</dbReference>
<dbReference type="PROSITE" id="PS01223">
    <property type="entry name" value="PROA"/>
    <property type="match status" value="1"/>
</dbReference>
<accession>B6JD19</accession>
<accession>F8BTC1</accession>
<name>PROA_AFIC5</name>
<gene>
    <name evidence="1" type="primary">proA</name>
    <name type="ordered locus">OCAR_4605</name>
    <name type="ordered locus">OCA5_c33390</name>
</gene>
<keyword id="KW-0028">Amino-acid biosynthesis</keyword>
<keyword id="KW-0963">Cytoplasm</keyword>
<keyword id="KW-0521">NADP</keyword>
<keyword id="KW-0560">Oxidoreductase</keyword>
<keyword id="KW-0641">Proline biosynthesis</keyword>
<keyword id="KW-1185">Reference proteome</keyword>
<proteinExistence type="inferred from homology"/>
<protein>
    <recommendedName>
        <fullName evidence="1">Gamma-glutamyl phosphate reductase</fullName>
        <shortName evidence="1">GPR</shortName>
        <ecNumber evidence="1">1.2.1.41</ecNumber>
    </recommendedName>
    <alternativeName>
        <fullName evidence="1">Glutamate-5-semialdehyde dehydrogenase</fullName>
    </alternativeName>
    <alternativeName>
        <fullName evidence="1">Glutamyl-gamma-semialdehyde dehydrogenase</fullName>
        <shortName evidence="1">GSA dehydrogenase</shortName>
    </alternativeName>
</protein>